<keyword id="KW-0328">Glycosyltransferase</keyword>
<keyword id="KW-1185">Reference proteome</keyword>
<keyword id="KW-0808">Transferase</keyword>
<reference evidence="4" key="1">
    <citation type="journal article" date="2011" name="PLoS ONE">
        <title>Disruption of Yarrowia lipolytica TPS1 gene encoding trehalose-6-P synthase does not affect growth in glucose but impairs growth at high temperature.</title>
        <authorList>
            <person name="Flores C.L."/>
            <person name="Gancedo C."/>
            <person name="Petit T."/>
        </authorList>
    </citation>
    <scope>NUCLEOTIDE SEQUENCE [MRNA]</scope>
    <scope>FUNCTION</scope>
    <scope>CATALYTIC ACTIVITY</scope>
    <source>
        <strain>PO1a</strain>
    </source>
</reference>
<reference key="2">
    <citation type="journal article" date="2004" name="Nature">
        <title>Genome evolution in yeasts.</title>
        <authorList>
            <person name="Dujon B."/>
            <person name="Sherman D."/>
            <person name="Fischer G."/>
            <person name="Durrens P."/>
            <person name="Casaregola S."/>
            <person name="Lafontaine I."/>
            <person name="de Montigny J."/>
            <person name="Marck C."/>
            <person name="Neuveglise C."/>
            <person name="Talla E."/>
            <person name="Goffard N."/>
            <person name="Frangeul L."/>
            <person name="Aigle M."/>
            <person name="Anthouard V."/>
            <person name="Babour A."/>
            <person name="Barbe V."/>
            <person name="Barnay S."/>
            <person name="Blanchin S."/>
            <person name="Beckerich J.-M."/>
            <person name="Beyne E."/>
            <person name="Bleykasten C."/>
            <person name="Boisrame A."/>
            <person name="Boyer J."/>
            <person name="Cattolico L."/>
            <person name="Confanioleri F."/>
            <person name="de Daruvar A."/>
            <person name="Despons L."/>
            <person name="Fabre E."/>
            <person name="Fairhead C."/>
            <person name="Ferry-Dumazet H."/>
            <person name="Groppi A."/>
            <person name="Hantraye F."/>
            <person name="Hennequin C."/>
            <person name="Jauniaux N."/>
            <person name="Joyet P."/>
            <person name="Kachouri R."/>
            <person name="Kerrest A."/>
            <person name="Koszul R."/>
            <person name="Lemaire M."/>
            <person name="Lesur I."/>
            <person name="Ma L."/>
            <person name="Muller H."/>
            <person name="Nicaud J.-M."/>
            <person name="Nikolski M."/>
            <person name="Oztas S."/>
            <person name="Ozier-Kalogeropoulos O."/>
            <person name="Pellenz S."/>
            <person name="Potier S."/>
            <person name="Richard G.-F."/>
            <person name="Straub M.-L."/>
            <person name="Suleau A."/>
            <person name="Swennen D."/>
            <person name="Tekaia F."/>
            <person name="Wesolowski-Louvel M."/>
            <person name="Westhof E."/>
            <person name="Wirth B."/>
            <person name="Zeniou-Meyer M."/>
            <person name="Zivanovic Y."/>
            <person name="Bolotin-Fukuhara M."/>
            <person name="Thierry A."/>
            <person name="Bouchier C."/>
            <person name="Caudron B."/>
            <person name="Scarpelli C."/>
            <person name="Gaillardin C."/>
            <person name="Weissenbach J."/>
            <person name="Wincker P."/>
            <person name="Souciet J.-L."/>
        </authorList>
    </citation>
    <scope>NUCLEOTIDE SEQUENCE [LARGE SCALE GENOMIC DNA]</scope>
    <source>
        <strain>CLIB 122 / E 150</strain>
    </source>
</reference>
<protein>
    <recommendedName>
        <fullName>Alpha,alpha-trehalose-phosphate synthase [UDP-forming]</fullName>
        <ecNumber evidence="5">2.4.1.15</ecNumber>
    </recommendedName>
    <alternativeName>
        <fullName>Trehalose-6-phosphate synthase</fullName>
    </alternativeName>
    <alternativeName>
        <fullName>UDP-glucose-glucosephosphate glucosyltransferase</fullName>
    </alternativeName>
</protein>
<evidence type="ECO:0000250" key="1">
    <source>
        <dbReference type="UniProtKB" id="Q92410"/>
    </source>
</evidence>
<evidence type="ECO:0000269" key="2">
    <source>
    </source>
</evidence>
<evidence type="ECO:0000303" key="3">
    <source>
    </source>
</evidence>
<evidence type="ECO:0000305" key="4"/>
<evidence type="ECO:0000305" key="5">
    <source>
    </source>
</evidence>
<comment type="function">
    <text evidence="2">Synthase catalytic subunit of the trehalose synthase complex that catalyzes the production of trehalose from glucose-6-phosphate and UDP-alpha-D-glucose in a two step process (PubMed:21931609). The disaccharide trehalose serves as a storage carbohydrate that is mobilized during spore germination (PubMed:21931609).</text>
</comment>
<comment type="catalytic activity">
    <reaction evidence="5">
        <text>D-glucose 6-phosphate + UDP-alpha-D-glucose = alpha,alpha-trehalose 6-phosphate + UDP + H(+)</text>
        <dbReference type="Rhea" id="RHEA:18889"/>
        <dbReference type="ChEBI" id="CHEBI:15378"/>
        <dbReference type="ChEBI" id="CHEBI:58223"/>
        <dbReference type="ChEBI" id="CHEBI:58429"/>
        <dbReference type="ChEBI" id="CHEBI:58885"/>
        <dbReference type="ChEBI" id="CHEBI:61548"/>
        <dbReference type="EC" id="2.4.1.15"/>
    </reaction>
</comment>
<comment type="pathway">
    <text evidence="4">Carbohydrate biosynthesis.</text>
</comment>
<comment type="similarity">
    <text evidence="4">Belongs to the glycosyltransferase 20 family.</text>
</comment>
<dbReference type="EC" id="2.4.1.15" evidence="5"/>
<dbReference type="EMBL" id="AJ011032">
    <property type="protein sequence ID" value="CAA09463.1"/>
    <property type="molecule type" value="mRNA"/>
</dbReference>
<dbReference type="EMBL" id="CR382131">
    <property type="protein sequence ID" value="CAG79544.1"/>
    <property type="molecule type" value="Genomic_DNA"/>
</dbReference>
<dbReference type="RefSeq" id="XP_503951.1">
    <property type="nucleotide sequence ID" value="XM_503951.1"/>
</dbReference>
<dbReference type="SMR" id="O74932"/>
<dbReference type="FunCoup" id="O74932">
    <property type="interactions" value="610"/>
</dbReference>
<dbReference type="STRING" id="284591.O74932"/>
<dbReference type="CAZy" id="GT20">
    <property type="family name" value="Glycosyltransferase Family 20"/>
</dbReference>
<dbReference type="EnsemblFungi" id="CAG79544">
    <property type="protein sequence ID" value="CAG79544"/>
    <property type="gene ID" value="YALI0_E14685g"/>
</dbReference>
<dbReference type="KEGG" id="yli:2912305"/>
<dbReference type="VEuPathDB" id="FungiDB:YALI0_E14685g"/>
<dbReference type="HOGENOM" id="CLU_002351_7_2_1"/>
<dbReference type="InParanoid" id="O74932"/>
<dbReference type="OMA" id="NRTIWPL"/>
<dbReference type="OrthoDB" id="107251at4891"/>
<dbReference type="Proteomes" id="UP000001300">
    <property type="component" value="Chromosome E"/>
</dbReference>
<dbReference type="GO" id="GO:0005946">
    <property type="term" value="C:alpha,alpha-trehalose-phosphate synthase complex (UDP-forming)"/>
    <property type="evidence" value="ECO:0000318"/>
    <property type="project" value="GO_Central"/>
</dbReference>
<dbReference type="GO" id="GO:0003825">
    <property type="term" value="F:alpha,alpha-trehalose-phosphate synthase (UDP-forming) activity"/>
    <property type="evidence" value="ECO:0000318"/>
    <property type="project" value="GO_Central"/>
</dbReference>
<dbReference type="GO" id="GO:0102986">
    <property type="term" value="F:trehalose synthase activity"/>
    <property type="evidence" value="ECO:0000316"/>
    <property type="project" value="UniProtKB"/>
</dbReference>
<dbReference type="GO" id="GO:0004805">
    <property type="term" value="F:trehalose-phosphatase activity"/>
    <property type="evidence" value="ECO:0007669"/>
    <property type="project" value="EnsemblFungi"/>
</dbReference>
<dbReference type="GO" id="GO:0071465">
    <property type="term" value="P:cellular response to desiccation"/>
    <property type="evidence" value="ECO:0007669"/>
    <property type="project" value="EnsemblFungi"/>
</dbReference>
<dbReference type="GO" id="GO:0034605">
    <property type="term" value="P:cellular response to heat"/>
    <property type="evidence" value="ECO:0000318"/>
    <property type="project" value="GO_Central"/>
</dbReference>
<dbReference type="GO" id="GO:0005992">
    <property type="term" value="P:trehalose biosynthetic process"/>
    <property type="evidence" value="ECO:0000316"/>
    <property type="project" value="UniProtKB"/>
</dbReference>
<dbReference type="CDD" id="cd03788">
    <property type="entry name" value="GT20_TPS"/>
    <property type="match status" value="1"/>
</dbReference>
<dbReference type="FunFam" id="3.40.50.2000:FF:000007">
    <property type="entry name" value="Trehalose-6-phosphate synthase"/>
    <property type="match status" value="1"/>
</dbReference>
<dbReference type="FunFam" id="3.40.50.2000:FF:000035">
    <property type="entry name" value="Trehalose-6-phosphate synthase"/>
    <property type="match status" value="1"/>
</dbReference>
<dbReference type="Gene3D" id="3.40.50.2000">
    <property type="entry name" value="Glycogen Phosphorylase B"/>
    <property type="match status" value="2"/>
</dbReference>
<dbReference type="InterPro" id="IPR001830">
    <property type="entry name" value="Glyco_trans_20"/>
</dbReference>
<dbReference type="InterPro" id="IPR012766">
    <property type="entry name" value="Trehalose_OtsA"/>
</dbReference>
<dbReference type="NCBIfam" id="TIGR02400">
    <property type="entry name" value="trehalose_OtsA"/>
    <property type="match status" value="1"/>
</dbReference>
<dbReference type="PANTHER" id="PTHR10788:SF106">
    <property type="entry name" value="BCDNA.GH08860"/>
    <property type="match status" value="1"/>
</dbReference>
<dbReference type="PANTHER" id="PTHR10788">
    <property type="entry name" value="TREHALOSE-6-PHOSPHATE SYNTHASE"/>
    <property type="match status" value="1"/>
</dbReference>
<dbReference type="Pfam" id="PF00982">
    <property type="entry name" value="Glyco_transf_20"/>
    <property type="match status" value="1"/>
</dbReference>
<dbReference type="SUPFAM" id="SSF53756">
    <property type="entry name" value="UDP-Glycosyltransferase/glycogen phosphorylase"/>
    <property type="match status" value="1"/>
</dbReference>
<sequence>MPNVLVISNRLPVTISREEDGTYKYTMSSGGLVTALSGLKQSTTFQWFGWPGLEIPEKDKPRLINDLETMFSCVPVFMDDDLADLHYNGFSNSILWPLFHYHPGEMNFDQVAWEAYTQANRLFAKKVASIVKPGDIVWVHDYHLMLLPEMLREECENNSALDGLKIGFFLHTPFPSSEIYRILPVRKEVLTGVLSCNLIGFHTYDYARHFLSSVSRILDLETMPNGTYYKGRHVVVGAFPIGIDVNKFLEGCKRPAVQERIAQLQDKFKGIKVVVGVDRLDYIKGVPQKLHAFEVFLSEHPEWIGKVVLVQVAVPSRGLVEEYQNLRAVVNELVGRINGMFGTVEFTPIHFMHRSVDFNELIALYSISDVCFVSSTRDGMNLVSYEYVACQTEKHGSLILSEFTGAAQSLNGALIVNPWNTEDMAEALYDSLTFSPEKKAENHRKLFKYVSKYTSQHWGEAFVSELKRC</sequence>
<proteinExistence type="evidence at protein level"/>
<organism>
    <name type="scientific">Yarrowia lipolytica (strain CLIB 122 / E 150)</name>
    <name type="common">Yeast</name>
    <name type="synonym">Candida lipolytica</name>
    <dbReference type="NCBI Taxonomy" id="284591"/>
    <lineage>
        <taxon>Eukaryota</taxon>
        <taxon>Fungi</taxon>
        <taxon>Dikarya</taxon>
        <taxon>Ascomycota</taxon>
        <taxon>Saccharomycotina</taxon>
        <taxon>Dipodascomycetes</taxon>
        <taxon>Dipodascales</taxon>
        <taxon>Dipodascales incertae sedis</taxon>
        <taxon>Yarrowia</taxon>
    </lineage>
</organism>
<gene>
    <name evidence="3" type="primary">TPS1</name>
    <name evidence="3" type="synonym">YITPS1</name>
    <name type="ordered locus">YALI0E14685g</name>
</gene>
<accession>O74932</accession>
<name>TPS1_YARLI</name>
<feature type="chain" id="PRO_0000122501" description="Alpha,alpha-trehalose-phosphate synthase [UDP-forming]">
    <location>
        <begin position="1"/>
        <end position="469"/>
    </location>
</feature>
<feature type="binding site" evidence="1">
    <location>
        <position position="87"/>
    </location>
    <ligand>
        <name>D-glucose 6-phosphate</name>
        <dbReference type="ChEBI" id="CHEBI:61548"/>
    </ligand>
</feature>
<feature type="binding site" evidence="1">
    <location>
        <position position="141"/>
    </location>
    <ligand>
        <name>D-glucose 6-phosphate</name>
        <dbReference type="ChEBI" id="CHEBI:61548"/>
    </ligand>
</feature>
<feature type="binding site" evidence="1">
    <location>
        <position position="279"/>
    </location>
    <ligand>
        <name>UDP</name>
        <dbReference type="ChEBI" id="CHEBI:58223"/>
    </ligand>
</feature>
<feature type="binding site" evidence="1">
    <location>
        <position position="279"/>
    </location>
    <ligand>
        <name>UDP-alpha-D-glucose</name>
        <dbReference type="ChEBI" id="CHEBI:58885"/>
    </ligand>
</feature>
<feature type="binding site" evidence="1">
    <location>
        <position position="284"/>
    </location>
    <ligand>
        <name>UDP</name>
        <dbReference type="ChEBI" id="CHEBI:58223"/>
    </ligand>
</feature>
<feature type="binding site" evidence="1">
    <location>
        <position position="284"/>
    </location>
    <ligand>
        <name>UDP-alpha-D-glucose</name>
        <dbReference type="ChEBI" id="CHEBI:58885"/>
    </ligand>
</feature>
<feature type="binding site" evidence="1">
    <location>
        <position position="317"/>
    </location>
    <ligand>
        <name>D-glucose 6-phosphate</name>
        <dbReference type="ChEBI" id="CHEBI:61548"/>
    </ligand>
</feature>
<feature type="binding site" evidence="1">
    <location>
        <begin position="378"/>
        <end position="386"/>
    </location>
    <ligand>
        <name>UDP-alpha-D-glucose</name>
        <dbReference type="ChEBI" id="CHEBI:58885"/>
    </ligand>
</feature>
<feature type="binding site" evidence="1">
    <location>
        <begin position="382"/>
        <end position="386"/>
    </location>
    <ligand>
        <name>UDP</name>
        <dbReference type="ChEBI" id="CHEBI:58223"/>
    </ligand>
</feature>